<keyword id="KW-0963">Cytoplasm</keyword>
<keyword id="KW-0229">DNA integration</keyword>
<keyword id="KW-0233">DNA recombination</keyword>
<keyword id="KW-0238">DNA-binding</keyword>
<organism>
    <name type="scientific">Streptococcus pyogenes serotype M6 (strain ATCC BAA-946 / MGAS10394)</name>
    <dbReference type="NCBI Taxonomy" id="286636"/>
    <lineage>
        <taxon>Bacteria</taxon>
        <taxon>Bacillati</taxon>
        <taxon>Bacillota</taxon>
        <taxon>Bacilli</taxon>
        <taxon>Lactobacillales</taxon>
        <taxon>Streptococcaceae</taxon>
        <taxon>Streptococcus</taxon>
    </lineage>
</organism>
<evidence type="ECO:0000255" key="1">
    <source>
        <dbReference type="HAMAP-Rule" id="MF_01817"/>
    </source>
</evidence>
<evidence type="ECO:0000255" key="2">
    <source>
        <dbReference type="PROSITE-ProRule" id="PRU01246"/>
    </source>
</evidence>
<evidence type="ECO:0000255" key="3">
    <source>
        <dbReference type="PROSITE-ProRule" id="PRU01248"/>
    </source>
</evidence>
<comment type="function">
    <text evidence="1">Putative tyrosine recombinase. Not involved in the cutting and rejoining of the recombining DNA molecules on dif(SL) site.</text>
</comment>
<comment type="subcellular location">
    <subcellularLocation>
        <location evidence="1">Cytoplasm</location>
    </subcellularLocation>
</comment>
<comment type="similarity">
    <text evidence="1">Belongs to the 'phage' integrase family. XerD-like subfamily.</text>
</comment>
<reference key="1">
    <citation type="journal article" date="2004" name="J. Infect. Dis.">
        <title>Progress toward characterization of the group A Streptococcus metagenome: complete genome sequence of a macrolide-resistant serotype M6 strain.</title>
        <authorList>
            <person name="Banks D.J."/>
            <person name="Porcella S.F."/>
            <person name="Barbian K.D."/>
            <person name="Beres S.B."/>
            <person name="Philips L.E."/>
            <person name="Voyich J.M."/>
            <person name="DeLeo F.R."/>
            <person name="Martin J.M."/>
            <person name="Somerville G.A."/>
            <person name="Musser J.M."/>
        </authorList>
    </citation>
    <scope>NUCLEOTIDE SEQUENCE [LARGE SCALE GENOMIC DNA]</scope>
    <source>
        <strain>ATCC BAA-946 / MGAS10394</strain>
    </source>
</reference>
<name>XERDL_STRP6</name>
<protein>
    <recommendedName>
        <fullName evidence="1">Tyrosine recombinase XerD-like</fullName>
    </recommendedName>
</protein>
<gene>
    <name type="ordered locus">M6_Spy0333</name>
</gene>
<proteinExistence type="inferred from homology"/>
<dbReference type="EMBL" id="CP000003">
    <property type="protein sequence ID" value="AAT86468.1"/>
    <property type="molecule type" value="Genomic_DNA"/>
</dbReference>
<dbReference type="SMR" id="Q5XDP5"/>
<dbReference type="KEGG" id="spa:M6_Spy0333"/>
<dbReference type="HOGENOM" id="CLU_1128554_0_0_9"/>
<dbReference type="Proteomes" id="UP000001167">
    <property type="component" value="Chromosome"/>
</dbReference>
<dbReference type="GO" id="GO:0005737">
    <property type="term" value="C:cytoplasm"/>
    <property type="evidence" value="ECO:0007669"/>
    <property type="project" value="UniProtKB-SubCell"/>
</dbReference>
<dbReference type="GO" id="GO:0003677">
    <property type="term" value="F:DNA binding"/>
    <property type="evidence" value="ECO:0007669"/>
    <property type="project" value="UniProtKB-KW"/>
</dbReference>
<dbReference type="GO" id="GO:0009037">
    <property type="term" value="F:tyrosine-based site-specific recombinase activity"/>
    <property type="evidence" value="ECO:0007669"/>
    <property type="project" value="UniProtKB-UniRule"/>
</dbReference>
<dbReference type="GO" id="GO:0006313">
    <property type="term" value="P:DNA transposition"/>
    <property type="evidence" value="ECO:0007669"/>
    <property type="project" value="UniProtKB-UniRule"/>
</dbReference>
<dbReference type="CDD" id="cd01190">
    <property type="entry name" value="INT_StrepXerD_C_like"/>
    <property type="match status" value="1"/>
</dbReference>
<dbReference type="Gene3D" id="1.10.150.130">
    <property type="match status" value="1"/>
</dbReference>
<dbReference type="Gene3D" id="1.10.443.10">
    <property type="entry name" value="Intergrase catalytic core"/>
    <property type="match status" value="1"/>
</dbReference>
<dbReference type="HAMAP" id="MF_01817">
    <property type="entry name" value="Recomb_XerD_like"/>
    <property type="match status" value="1"/>
</dbReference>
<dbReference type="InterPro" id="IPR044068">
    <property type="entry name" value="CB"/>
</dbReference>
<dbReference type="InterPro" id="IPR011010">
    <property type="entry name" value="DNA_brk_join_enz"/>
</dbReference>
<dbReference type="InterPro" id="IPR013762">
    <property type="entry name" value="Integrase-like_cat_sf"/>
</dbReference>
<dbReference type="InterPro" id="IPR002104">
    <property type="entry name" value="Integrase_catalytic"/>
</dbReference>
<dbReference type="InterPro" id="IPR010998">
    <property type="entry name" value="Integrase_recombinase_N"/>
</dbReference>
<dbReference type="InterPro" id="IPR020876">
    <property type="entry name" value="Tyrosine_recombinase_XerD-like"/>
</dbReference>
<dbReference type="NCBIfam" id="NF002685">
    <property type="entry name" value="PRK02436.1"/>
    <property type="match status" value="1"/>
</dbReference>
<dbReference type="SUPFAM" id="SSF56349">
    <property type="entry name" value="DNA breaking-rejoining enzymes"/>
    <property type="match status" value="1"/>
</dbReference>
<dbReference type="PROSITE" id="PS51900">
    <property type="entry name" value="CB"/>
    <property type="match status" value="1"/>
</dbReference>
<dbReference type="PROSITE" id="PS51898">
    <property type="entry name" value="TYR_RECOMBINASE"/>
    <property type="match status" value="1"/>
</dbReference>
<feature type="chain" id="PRO_0000095444" description="Tyrosine recombinase XerD-like">
    <location>
        <begin position="1"/>
        <end position="248"/>
    </location>
</feature>
<feature type="domain" description="Core-binding (CB)" evidence="3">
    <location>
        <begin position="1"/>
        <end position="72"/>
    </location>
</feature>
<feature type="domain" description="Tyr recombinase" evidence="2">
    <location>
        <begin position="85"/>
        <end position="248"/>
    </location>
</feature>
<feature type="active site" evidence="2">
    <location>
        <position position="149"/>
    </location>
</feature>
<feature type="active site" evidence="2">
    <location>
        <position position="213"/>
    </location>
</feature>
<feature type="active site" description="O-(3'-phospho-DNA)-tyrosine intermediate" evidence="2">
    <location>
        <position position="245"/>
    </location>
</feature>
<accession>Q5XDP5</accession>
<sequence>MKSYIEPFIASKALSQNSQKAYRYDLQQFCQLVGERVNQDKLLLYQNSIANLSLSAKKRKLSTANQFLYYLYQIKYLNSYFRLTDTMKVMRTEKQQAAIINTDIFYQKTPFVWGQLISLLILELGLTPSEVAGIEVANLDLSFQMLTLKTKKGVRVLPLSQILIPFLEQQLVGKEVYLFEHRGIPFSRQWFFNHLKTFVRSIGYEGLTAQKLREQFILKEKLAGKSIIELSDILGLKSPVTLEKYYKS</sequence>